<organism>
    <name type="scientific">Hamiltonella defensa subsp. Acyrthosiphon pisum (strain 5AT)</name>
    <dbReference type="NCBI Taxonomy" id="572265"/>
    <lineage>
        <taxon>Bacteria</taxon>
        <taxon>Pseudomonadati</taxon>
        <taxon>Pseudomonadota</taxon>
        <taxon>Gammaproteobacteria</taxon>
        <taxon>Enterobacterales</taxon>
        <taxon>Enterobacteriaceae</taxon>
        <taxon>aphid secondary symbionts</taxon>
        <taxon>Candidatus Hamiltonella</taxon>
    </lineage>
</organism>
<reference key="1">
    <citation type="journal article" date="2009" name="Proc. Natl. Acad. Sci. U.S.A.">
        <title>Hamiltonella defensa, genome evolution of protective bacterial endosymbiont from pathogenic ancestors.</title>
        <authorList>
            <person name="Degnan P.H."/>
            <person name="Yu Y."/>
            <person name="Sisneros N."/>
            <person name="Wing R.A."/>
            <person name="Moran N.A."/>
        </authorList>
    </citation>
    <scope>NUCLEOTIDE SEQUENCE [LARGE SCALE GENOMIC DNA]</scope>
    <source>
        <strain>5AT</strain>
    </source>
</reference>
<dbReference type="EC" id="2.7.1.130" evidence="1"/>
<dbReference type="EMBL" id="CP001277">
    <property type="protein sequence ID" value="ACQ66999.1"/>
    <property type="molecule type" value="Genomic_DNA"/>
</dbReference>
<dbReference type="RefSeq" id="WP_012737964.1">
    <property type="nucleotide sequence ID" value="NC_012751.1"/>
</dbReference>
<dbReference type="SMR" id="C4K356"/>
<dbReference type="STRING" id="572265.HDEF_0231"/>
<dbReference type="GeneID" id="66260156"/>
<dbReference type="KEGG" id="hde:HDEF_0231"/>
<dbReference type="eggNOG" id="COG1663">
    <property type="taxonomic scope" value="Bacteria"/>
</dbReference>
<dbReference type="HOGENOM" id="CLU_038816_2_0_6"/>
<dbReference type="UniPathway" id="UPA00359">
    <property type="reaction ID" value="UER00482"/>
</dbReference>
<dbReference type="Proteomes" id="UP000002334">
    <property type="component" value="Chromosome"/>
</dbReference>
<dbReference type="GO" id="GO:0005886">
    <property type="term" value="C:plasma membrane"/>
    <property type="evidence" value="ECO:0007669"/>
    <property type="project" value="TreeGrafter"/>
</dbReference>
<dbReference type="GO" id="GO:0005524">
    <property type="term" value="F:ATP binding"/>
    <property type="evidence" value="ECO:0007669"/>
    <property type="project" value="UniProtKB-UniRule"/>
</dbReference>
<dbReference type="GO" id="GO:0009029">
    <property type="term" value="F:tetraacyldisaccharide 4'-kinase activity"/>
    <property type="evidence" value="ECO:0007669"/>
    <property type="project" value="UniProtKB-UniRule"/>
</dbReference>
<dbReference type="GO" id="GO:0009245">
    <property type="term" value="P:lipid A biosynthetic process"/>
    <property type="evidence" value="ECO:0007669"/>
    <property type="project" value="UniProtKB-UniRule"/>
</dbReference>
<dbReference type="GO" id="GO:0009244">
    <property type="term" value="P:lipopolysaccharide core region biosynthetic process"/>
    <property type="evidence" value="ECO:0007669"/>
    <property type="project" value="TreeGrafter"/>
</dbReference>
<dbReference type="HAMAP" id="MF_00409">
    <property type="entry name" value="LpxK"/>
    <property type="match status" value="1"/>
</dbReference>
<dbReference type="InterPro" id="IPR003758">
    <property type="entry name" value="LpxK"/>
</dbReference>
<dbReference type="InterPro" id="IPR027417">
    <property type="entry name" value="P-loop_NTPase"/>
</dbReference>
<dbReference type="NCBIfam" id="TIGR00682">
    <property type="entry name" value="lpxK"/>
    <property type="match status" value="1"/>
</dbReference>
<dbReference type="PANTHER" id="PTHR42724">
    <property type="entry name" value="TETRAACYLDISACCHARIDE 4'-KINASE"/>
    <property type="match status" value="1"/>
</dbReference>
<dbReference type="PANTHER" id="PTHR42724:SF1">
    <property type="entry name" value="TETRAACYLDISACCHARIDE 4'-KINASE, MITOCHONDRIAL-RELATED"/>
    <property type="match status" value="1"/>
</dbReference>
<dbReference type="Pfam" id="PF02606">
    <property type="entry name" value="LpxK"/>
    <property type="match status" value="1"/>
</dbReference>
<dbReference type="SUPFAM" id="SSF52540">
    <property type="entry name" value="P-loop containing nucleoside triphosphate hydrolases"/>
    <property type="match status" value="1"/>
</dbReference>
<proteinExistence type="inferred from homology"/>
<protein>
    <recommendedName>
        <fullName evidence="1">Tetraacyldisaccharide 4'-kinase</fullName>
        <ecNumber evidence="1">2.7.1.130</ecNumber>
    </recommendedName>
    <alternativeName>
        <fullName evidence="1">Lipid A 4'-kinase</fullName>
    </alternativeName>
</protein>
<keyword id="KW-0067">ATP-binding</keyword>
<keyword id="KW-0418">Kinase</keyword>
<keyword id="KW-0441">Lipid A biosynthesis</keyword>
<keyword id="KW-0444">Lipid biosynthesis</keyword>
<keyword id="KW-0443">Lipid metabolism</keyword>
<keyword id="KW-0547">Nucleotide-binding</keyword>
<keyword id="KW-0808">Transferase</keyword>
<accession>C4K356</accession>
<comment type="function">
    <text evidence="1">Transfers the gamma-phosphate of ATP to the 4'-position of a tetraacyldisaccharide 1-phosphate intermediate (termed DS-1-P) to form tetraacyldisaccharide 1,4'-bis-phosphate (lipid IVA).</text>
</comment>
<comment type="catalytic activity">
    <reaction evidence="1">
        <text>a lipid A disaccharide + ATP = a lipid IVA + ADP + H(+)</text>
        <dbReference type="Rhea" id="RHEA:67840"/>
        <dbReference type="ChEBI" id="CHEBI:15378"/>
        <dbReference type="ChEBI" id="CHEBI:30616"/>
        <dbReference type="ChEBI" id="CHEBI:176343"/>
        <dbReference type="ChEBI" id="CHEBI:176425"/>
        <dbReference type="ChEBI" id="CHEBI:456216"/>
        <dbReference type="EC" id="2.7.1.130"/>
    </reaction>
</comment>
<comment type="pathway">
    <text evidence="1">Glycolipid biosynthesis; lipid IV(A) biosynthesis; lipid IV(A) from (3R)-3-hydroxytetradecanoyl-[acyl-carrier-protein] and UDP-N-acetyl-alpha-D-glucosamine: step 6/6.</text>
</comment>
<comment type="similarity">
    <text evidence="1">Belongs to the LpxK family.</text>
</comment>
<gene>
    <name evidence="1" type="primary">lpxK</name>
    <name type="ordered locus">HDEF_0231</name>
</gene>
<sequence length="328" mass="36750">MIDRIWFGHSRLYLLLLPFSWLYGLITWLIRLSYRSGLRVAWRSPIPIVVVGNLTVGGNGKTPIVIWLVEQLKKRGLQVGVVSRGYSGKSGKYPLILSHHTQPEEAGDEPVVIFQRTGVPVAVAPKRKEAIRALLKKHPLDLLIADDGLQHYALKRDFELVVIDGIRRFGNACLLPAGPMRENITRLHSVDAIIINGGEAQKEEILMQLRPSQAVNLVTGEKKPVEELISVIAMAGIGHPDRFFMMLAQLGVNIIKTQIFSDHQHYTLSTLLPLAKKTQSLCMTEKDAVKCKAFAQPNWWYLPVSADFPFVQSQKLLASIEALCHRIC</sequence>
<feature type="chain" id="PRO_1000205970" description="Tetraacyldisaccharide 4'-kinase">
    <location>
        <begin position="1"/>
        <end position="328"/>
    </location>
</feature>
<feature type="binding site" evidence="1">
    <location>
        <begin position="55"/>
        <end position="62"/>
    </location>
    <ligand>
        <name>ATP</name>
        <dbReference type="ChEBI" id="CHEBI:30616"/>
    </ligand>
</feature>
<evidence type="ECO:0000255" key="1">
    <source>
        <dbReference type="HAMAP-Rule" id="MF_00409"/>
    </source>
</evidence>
<name>LPXK_HAMD5</name>